<organism>
    <name type="scientific">Rattus norvegicus</name>
    <name type="common">Rat</name>
    <dbReference type="NCBI Taxonomy" id="10116"/>
    <lineage>
        <taxon>Eukaryota</taxon>
        <taxon>Metazoa</taxon>
        <taxon>Chordata</taxon>
        <taxon>Craniata</taxon>
        <taxon>Vertebrata</taxon>
        <taxon>Euteleostomi</taxon>
        <taxon>Mammalia</taxon>
        <taxon>Eutheria</taxon>
        <taxon>Euarchontoglires</taxon>
        <taxon>Glires</taxon>
        <taxon>Rodentia</taxon>
        <taxon>Myomorpha</taxon>
        <taxon>Muroidea</taxon>
        <taxon>Muridae</taxon>
        <taxon>Murinae</taxon>
        <taxon>Rattus</taxon>
    </lineage>
</organism>
<sequence>MAGAIIENMSTKKLCIVGGILLVFQIVAFLVGGLIAPAPTTAVSYVAAKCVDVRKNHHKTRWLMPWGPNKCNKINDFEEAIPREIEANDIVFSVHIPLPSMEMSPWFQFMLFILQIDIAFKLNNQIRENAEVSMDVSLGYRDDMFSEWTEMAHERVPRKLRCTFTSPKTPEHEGRHYECDVLPFMEIGSVAHKYYLLNIRLPVNEKKKINVGIGEIKDIRLVGIHQNGGFTKVWFAMKTFLTPSIFIIMVWYWRRITMMSRPPVLLEKVIFALGISMTFINIPVEWFSIGFDWTWMLLFGDIRQGIFYAMLLSFWIIFCGEHMMDQHERNHIAGYWKQVGPIAVGSFCLFIFDMCERGVQLTNPFYSIWTTDVGTELAMAFIIVAGICLCLYFLFLCFMVFQVFRNISGKQSSLPAMSKVRRLHYEGLIFRFKFLMLITLACAAMTVIFFIVSQVTEGHWKWGGVTVQVSSAFFTGIYGMWNLYVFALMFLYAPSHKNYGEDQSNGDLGVHSGEELQLTTTITHVDGPTEIYKLTRKEAQE</sequence>
<dbReference type="EMBL" id="AY569010">
    <property type="protein sequence ID" value="AAS75313.1"/>
    <property type="molecule type" value="mRNA"/>
</dbReference>
<dbReference type="EMBL" id="BC062391">
    <property type="protein sequence ID" value="AAH62391.1"/>
    <property type="molecule type" value="mRNA"/>
</dbReference>
<dbReference type="RefSeq" id="NP_001078822.1">
    <property type="nucleotide sequence ID" value="NM_001085353.1"/>
</dbReference>
<dbReference type="RefSeq" id="NP_955440.1">
    <property type="nucleotide sequence ID" value="NM_199408.3"/>
</dbReference>
<dbReference type="SMR" id="Q6P689"/>
<dbReference type="FunCoup" id="Q6P689">
    <property type="interactions" value="2064"/>
</dbReference>
<dbReference type="IntAct" id="Q6P689">
    <property type="interactions" value="1"/>
</dbReference>
<dbReference type="STRING" id="10116.ENSRNOP00000052120"/>
<dbReference type="GlyGen" id="Q6P689">
    <property type="glycosylation" value="1 site"/>
</dbReference>
<dbReference type="PhosphoSitePlus" id="Q6P689"/>
<dbReference type="jPOST" id="Q6P689"/>
<dbReference type="PaxDb" id="10116-ENSRNOP00000052120"/>
<dbReference type="Ensembl" id="ENSRNOT00000055245.4">
    <property type="protein sequence ID" value="ENSRNOP00000052120.2"/>
    <property type="gene ID" value="ENSRNOG00000036816.4"/>
</dbReference>
<dbReference type="GeneID" id="362065"/>
<dbReference type="KEGG" id="rno:362065"/>
<dbReference type="AGR" id="RGD:735139"/>
<dbReference type="CTD" id="79971"/>
<dbReference type="RGD" id="735139">
    <property type="gene designation" value="Wls"/>
</dbReference>
<dbReference type="eggNOG" id="ENOG502QSE2">
    <property type="taxonomic scope" value="Eukaryota"/>
</dbReference>
<dbReference type="GeneTree" id="ENSGT00390000005897"/>
<dbReference type="HOGENOM" id="CLU_022911_0_0_1"/>
<dbReference type="InParanoid" id="Q6P689"/>
<dbReference type="OMA" id="GQWKWDE"/>
<dbReference type="OrthoDB" id="5804250at2759"/>
<dbReference type="PhylomeDB" id="Q6P689"/>
<dbReference type="Reactome" id="R-RNO-3238698">
    <property type="pathway name" value="WNT ligand biogenesis and trafficking"/>
</dbReference>
<dbReference type="PRO" id="PR:Q6P689"/>
<dbReference type="Proteomes" id="UP000002494">
    <property type="component" value="Chromosome 2"/>
</dbReference>
<dbReference type="Bgee" id="ENSRNOG00000036816">
    <property type="expression patterns" value="Expressed in adult mammalian kidney and 19 other cell types or tissues"/>
</dbReference>
<dbReference type="ExpressionAtlas" id="Q6P689">
    <property type="expression patterns" value="baseline and differential"/>
</dbReference>
<dbReference type="GO" id="GO:0005737">
    <property type="term" value="C:cytoplasm"/>
    <property type="evidence" value="ECO:0000314"/>
    <property type="project" value="RGD"/>
</dbReference>
<dbReference type="GO" id="GO:0031410">
    <property type="term" value="C:cytoplasmic vesicle"/>
    <property type="evidence" value="ECO:0000250"/>
    <property type="project" value="UniProtKB"/>
</dbReference>
<dbReference type="GO" id="GO:0032839">
    <property type="term" value="C:dendrite cytoplasm"/>
    <property type="evidence" value="ECO:0000314"/>
    <property type="project" value="RGD"/>
</dbReference>
<dbReference type="GO" id="GO:0032590">
    <property type="term" value="C:dendrite membrane"/>
    <property type="evidence" value="ECO:0000314"/>
    <property type="project" value="RGD"/>
</dbReference>
<dbReference type="GO" id="GO:0005769">
    <property type="term" value="C:early endosome"/>
    <property type="evidence" value="ECO:0000266"/>
    <property type="project" value="RGD"/>
</dbReference>
<dbReference type="GO" id="GO:0031901">
    <property type="term" value="C:early endosome membrane"/>
    <property type="evidence" value="ECO:0007669"/>
    <property type="project" value="UniProtKB-SubCell"/>
</dbReference>
<dbReference type="GO" id="GO:0012505">
    <property type="term" value="C:endomembrane system"/>
    <property type="evidence" value="ECO:0000318"/>
    <property type="project" value="GO_Central"/>
</dbReference>
<dbReference type="GO" id="GO:0005783">
    <property type="term" value="C:endoplasmic reticulum"/>
    <property type="evidence" value="ECO:0000266"/>
    <property type="project" value="RGD"/>
</dbReference>
<dbReference type="GO" id="GO:0005789">
    <property type="term" value="C:endoplasmic reticulum membrane"/>
    <property type="evidence" value="ECO:0007669"/>
    <property type="project" value="UniProtKB-SubCell"/>
</dbReference>
<dbReference type="GO" id="GO:0005794">
    <property type="term" value="C:Golgi apparatus"/>
    <property type="evidence" value="ECO:0000250"/>
    <property type="project" value="UniProtKB"/>
</dbReference>
<dbReference type="GO" id="GO:0000139">
    <property type="term" value="C:Golgi membrane"/>
    <property type="evidence" value="ECO:0007669"/>
    <property type="project" value="UniProtKB-SubCell"/>
</dbReference>
<dbReference type="GO" id="GO:0005634">
    <property type="term" value="C:nucleus"/>
    <property type="evidence" value="ECO:0000314"/>
    <property type="project" value="RGD"/>
</dbReference>
<dbReference type="GO" id="GO:0031090">
    <property type="term" value="C:organelle membrane"/>
    <property type="evidence" value="ECO:0000318"/>
    <property type="project" value="GO_Central"/>
</dbReference>
<dbReference type="GO" id="GO:0005886">
    <property type="term" value="C:plasma membrane"/>
    <property type="evidence" value="ECO:0000314"/>
    <property type="project" value="RGD"/>
</dbReference>
<dbReference type="GO" id="GO:0005802">
    <property type="term" value="C:trans-Golgi network"/>
    <property type="evidence" value="ECO:0000266"/>
    <property type="project" value="RGD"/>
</dbReference>
<dbReference type="GO" id="GO:0031852">
    <property type="term" value="F:mu-type opioid receptor binding"/>
    <property type="evidence" value="ECO:0000353"/>
    <property type="project" value="RGD"/>
</dbReference>
<dbReference type="GO" id="GO:0017147">
    <property type="term" value="F:Wnt-protein binding"/>
    <property type="evidence" value="ECO:0000266"/>
    <property type="project" value="RGD"/>
</dbReference>
<dbReference type="GO" id="GO:0009948">
    <property type="term" value="P:anterior/posterior axis specification"/>
    <property type="evidence" value="ECO:0000250"/>
    <property type="project" value="UniProtKB"/>
</dbReference>
<dbReference type="GO" id="GO:0071529">
    <property type="term" value="P:cementum mineralization"/>
    <property type="evidence" value="ECO:0000266"/>
    <property type="project" value="RGD"/>
</dbReference>
<dbReference type="GO" id="GO:0031017">
    <property type="term" value="P:exocrine pancreas development"/>
    <property type="evidence" value="ECO:0000266"/>
    <property type="project" value="RGD"/>
</dbReference>
<dbReference type="GO" id="GO:0030902">
    <property type="term" value="P:hindbrain development"/>
    <property type="evidence" value="ECO:0000266"/>
    <property type="project" value="RGD"/>
</dbReference>
<dbReference type="GO" id="GO:0006886">
    <property type="term" value="P:intracellular protein transport"/>
    <property type="evidence" value="ECO:0000266"/>
    <property type="project" value="RGD"/>
</dbReference>
<dbReference type="GO" id="GO:0001707">
    <property type="term" value="P:mesoderm formation"/>
    <property type="evidence" value="ECO:0000266"/>
    <property type="project" value="RGD"/>
</dbReference>
<dbReference type="GO" id="GO:0030901">
    <property type="term" value="P:midbrain development"/>
    <property type="evidence" value="ECO:0000266"/>
    <property type="project" value="RGD"/>
</dbReference>
<dbReference type="GO" id="GO:0090263">
    <property type="term" value="P:positive regulation of canonical Wnt signaling pathway"/>
    <property type="evidence" value="ECO:0000266"/>
    <property type="project" value="RGD"/>
</dbReference>
<dbReference type="GO" id="GO:0050775">
    <property type="term" value="P:positive regulation of dendrite morphogenesis"/>
    <property type="evidence" value="ECO:0000315"/>
    <property type="project" value="RGD"/>
</dbReference>
<dbReference type="GO" id="GO:0061357">
    <property type="term" value="P:positive regulation of Wnt protein secretion"/>
    <property type="evidence" value="ECO:0000250"/>
    <property type="project" value="ParkinsonsUK-UCL"/>
</dbReference>
<dbReference type="GO" id="GO:0030177">
    <property type="term" value="P:positive regulation of Wnt signaling pathway"/>
    <property type="evidence" value="ECO:0000250"/>
    <property type="project" value="ParkinsonsUK-UCL"/>
</dbReference>
<dbReference type="GO" id="GO:0061355">
    <property type="term" value="P:Wnt protein secretion"/>
    <property type="evidence" value="ECO:0000266"/>
    <property type="project" value="RGD"/>
</dbReference>
<dbReference type="GO" id="GO:0016055">
    <property type="term" value="P:Wnt signaling pathway"/>
    <property type="evidence" value="ECO:0000250"/>
    <property type="project" value="UniProtKB"/>
</dbReference>
<dbReference type="InterPro" id="IPR047843">
    <property type="entry name" value="WLS-like_TM"/>
</dbReference>
<dbReference type="InterPro" id="IPR053936">
    <property type="entry name" value="WLS_GOLD"/>
</dbReference>
<dbReference type="InterPro" id="IPR009551">
    <property type="entry name" value="Wntless"/>
</dbReference>
<dbReference type="PANTHER" id="PTHR13449">
    <property type="entry name" value="INTEGRAL MEMBRANE PROTEIN GPR177"/>
    <property type="match status" value="1"/>
</dbReference>
<dbReference type="PANTHER" id="PTHR13449:SF2">
    <property type="entry name" value="PROTEIN WNTLESS HOMOLOG"/>
    <property type="match status" value="1"/>
</dbReference>
<dbReference type="Pfam" id="PF06664">
    <property type="entry name" value="WLS-like_TM"/>
    <property type="match status" value="1"/>
</dbReference>
<dbReference type="Pfam" id="PF21883">
    <property type="entry name" value="WLS_GOLD"/>
    <property type="match status" value="1"/>
</dbReference>
<evidence type="ECO:0000250" key="1"/>
<evidence type="ECO:0000250" key="2">
    <source>
        <dbReference type="UniProtKB" id="Q5T9L3"/>
    </source>
</evidence>
<evidence type="ECO:0000255" key="3"/>
<evidence type="ECO:0000269" key="4">
    <source>
    </source>
</evidence>
<evidence type="ECO:0000269" key="5">
    <source>
    </source>
</evidence>
<evidence type="ECO:0000305" key="6"/>
<proteinExistence type="evidence at protein level"/>
<gene>
    <name type="primary">Wls</name>
    <name type="synonym">Gpr177</name>
</gene>
<name>WLS_RAT</name>
<feature type="chain" id="PRO_0000271780" description="Protein wntless homolog">
    <location>
        <begin position="1"/>
        <end position="541"/>
    </location>
</feature>
<feature type="topological domain" description="Cytoplasmic" evidence="2">
    <location>
        <begin position="1"/>
        <end position="15"/>
    </location>
</feature>
<feature type="transmembrane region" description="Helical; Name=1" evidence="3">
    <location>
        <begin position="16"/>
        <end position="36"/>
    </location>
</feature>
<feature type="topological domain" description="Lumenal" evidence="2">
    <location>
        <begin position="37"/>
        <end position="232"/>
    </location>
</feature>
<feature type="transmembrane region" description="Helical; Name=2" evidence="3">
    <location>
        <begin position="233"/>
        <end position="253"/>
    </location>
</feature>
<feature type="topological domain" description="Cytoplasmic" evidence="2">
    <location>
        <begin position="254"/>
        <end position="268"/>
    </location>
</feature>
<feature type="transmembrane region" description="Helical; Name=3" evidence="3">
    <location>
        <begin position="269"/>
        <end position="289"/>
    </location>
</feature>
<feature type="topological domain" description="Lumenal" evidence="2">
    <location>
        <begin position="290"/>
        <end position="303"/>
    </location>
</feature>
<feature type="transmembrane region" description="Helical; Name=4" evidence="3">
    <location>
        <begin position="304"/>
        <end position="324"/>
    </location>
</feature>
<feature type="topological domain" description="Cytoplasmic" evidence="2">
    <location>
        <begin position="325"/>
        <end position="331"/>
    </location>
</feature>
<feature type="transmembrane region" description="Helical; Name=5" evidence="3">
    <location>
        <begin position="332"/>
        <end position="352"/>
    </location>
</feature>
<feature type="topological domain" description="Lumenal" evidence="2">
    <location>
        <begin position="353"/>
        <end position="380"/>
    </location>
</feature>
<feature type="transmembrane region" description="Helical; Name=6" evidence="3">
    <location>
        <begin position="381"/>
        <end position="401"/>
    </location>
</feature>
<feature type="topological domain" description="Cytoplasmic" evidence="2">
    <location>
        <begin position="402"/>
        <end position="431"/>
    </location>
</feature>
<feature type="transmembrane region" description="Helical; Name=7" evidence="3">
    <location>
        <begin position="432"/>
        <end position="452"/>
    </location>
</feature>
<feature type="topological domain" description="Lumenal" evidence="2">
    <location>
        <begin position="453"/>
        <end position="471"/>
    </location>
</feature>
<feature type="transmembrane region" description="Helical; Name=8" evidence="3">
    <location>
        <begin position="472"/>
        <end position="492"/>
    </location>
</feature>
<feature type="topological domain" description="Cytoplasmic" evidence="2">
    <location>
        <begin position="493"/>
        <end position="541"/>
    </location>
</feature>
<feature type="region of interest" description="Interaction with Wnt proteins">
    <location>
        <begin position="101"/>
        <end position="202"/>
    </location>
</feature>
<accession>Q6P689</accession>
<keyword id="KW-1003">Cell membrane</keyword>
<keyword id="KW-0968">Cytoplasmic vesicle</keyword>
<keyword id="KW-0217">Developmental protein</keyword>
<keyword id="KW-0256">Endoplasmic reticulum</keyword>
<keyword id="KW-0967">Endosome</keyword>
<keyword id="KW-0325">Glycoprotein</keyword>
<keyword id="KW-0333">Golgi apparatus</keyword>
<keyword id="KW-0472">Membrane</keyword>
<keyword id="KW-1185">Reference proteome</keyword>
<keyword id="KW-0812">Transmembrane</keyword>
<keyword id="KW-1133">Transmembrane helix</keyword>
<keyword id="KW-0879">Wnt signaling pathway</keyword>
<comment type="function">
    <text evidence="1">Regulates Wnt proteins sorting and secretion in a feedback regulatory mechanism. This reciprocal interaction plays a key role in the regulation of expression, subcellular location, binding and organelle-specific association of Wnt proteins. Also plays an important role in establishment of the anterior-posterior body axis formation during development (By similarity).</text>
</comment>
<comment type="subunit">
    <text evidence="1">Interacts with WNT3A. Interacts with WNT1, WNT3 and WNT5A.</text>
</comment>
<comment type="interaction">
    <interactant intactId="EBI-6113235">
        <id>Q6P689</id>
    </interactant>
    <interactant intactId="EBI-4392569">
        <id>P33535</id>
        <label>Oprm1</label>
    </interactant>
    <organismsDiffer>false</organismsDiffer>
    <experiments>2</experiments>
</comment>
<comment type="subcellular location">
    <subcellularLocation>
        <location evidence="2">Golgi apparatus membrane</location>
        <topology evidence="2">Multi-pass membrane protein</topology>
    </subcellularLocation>
    <subcellularLocation>
        <location evidence="2">Cytoplasmic vesicle membrane</location>
        <topology evidence="2">Multi-pass membrane protein</topology>
    </subcellularLocation>
    <subcellularLocation>
        <location evidence="2">Cell membrane</location>
        <topology evidence="3">Multi-pass membrane protein</topology>
    </subcellularLocation>
    <subcellularLocation>
        <location evidence="2">Endoplasmic reticulum membrane</location>
        <topology evidence="3">Multi-pass membrane protein</topology>
    </subcellularLocation>
    <subcellularLocation>
        <location evidence="2">Golgi apparatus membrane</location>
        <topology evidence="3">Multi-pass membrane protein</topology>
    </subcellularLocation>
    <subcellularLocation>
        <location evidence="2">Early endosome membrane</location>
        <topology evidence="3">Multi-pass membrane protein</topology>
    </subcellularLocation>
</comment>
<comment type="tissue specificity">
    <text evidence="4 5">Expressed in the brain, skeletal muscle, heart muscle, lung, gut, liver, and kidney (at protein level) (PubMed:20652957). In the brain, expressed in the cortex, striatum, ventral tegmentum, nucleus accumbens and to a lesser extent in the Purkinjie cells in the cerebellum (PubMed:20652957). Expressed in eye iridocorneal angle (PubMed:15326124).</text>
</comment>
<comment type="PTM">
    <text evidence="5">N-glycosylated.</text>
</comment>
<comment type="similarity">
    <text evidence="6">Belongs to the wntless family.</text>
</comment>
<protein>
    <recommendedName>
        <fullName>Protein wntless homolog</fullName>
    </recommendedName>
    <alternativeName>
        <fullName>Integral membrane protein GPR177</fullName>
    </alternativeName>
    <alternativeName>
        <fullName>Protein evenness interrupted homolog</fullName>
        <shortName>EVI</shortName>
    </alternativeName>
</protein>
<reference key="1">
    <citation type="journal article" date="2004" name="Invest. Ophthalmol. Vis. Sci.">
        <title>Gene expression profile of the rat eye iridocorneal angle: NEIBank expressed sequence tag analysis.</title>
        <authorList>
            <person name="Ahmed F."/>
            <person name="Torrado M."/>
            <person name="Zinovieva R.D."/>
            <person name="Senatorov V.V."/>
            <person name="Wistow G."/>
            <person name="Tomarev S.I."/>
        </authorList>
    </citation>
    <scope>NUCLEOTIDE SEQUENCE [LARGE SCALE MRNA]</scope>
    <scope>TISSUE SPECIFICITY</scope>
    <source>
        <strain>Wistar</strain>
    </source>
</reference>
<reference key="2">
    <citation type="journal article" date="2004" name="Genome Res.">
        <title>The status, quality, and expansion of the NIH full-length cDNA project: the Mammalian Gene Collection (MGC).</title>
        <authorList>
            <consortium name="The MGC Project Team"/>
        </authorList>
    </citation>
    <scope>NUCLEOTIDE SEQUENCE [LARGE SCALE MRNA]</scope>
    <source>
        <tissue>Prostate</tissue>
    </source>
</reference>
<reference key="3">
    <citation type="journal article" date="2010" name="Dev. Dyn.">
        <title>Expression of GPR177 (Wntless/Evi/Sprinter), a highly conserved Wnt-transport protein, in rat tissues, zebrafish embryos, and cultured human cells.</title>
        <authorList>
            <person name="Jin J."/>
            <person name="Morse M."/>
            <person name="Frey C."/>
            <person name="Petko J."/>
            <person name="Levenson R."/>
        </authorList>
    </citation>
    <scope>TISSUE SPECIFICITY</scope>
    <scope>GLYCOSYLATION</scope>
</reference>